<organism>
    <name type="scientific">Halobacterium salinarum (strain ATCC 29341 / DSM 671 / R1)</name>
    <dbReference type="NCBI Taxonomy" id="478009"/>
    <lineage>
        <taxon>Archaea</taxon>
        <taxon>Methanobacteriati</taxon>
        <taxon>Methanobacteriota</taxon>
        <taxon>Stenosarchaea group</taxon>
        <taxon>Halobacteria</taxon>
        <taxon>Halobacteriales</taxon>
        <taxon>Halobacteriaceae</taxon>
        <taxon>Halobacterium</taxon>
        <taxon>Halobacterium salinarum NRC-34001</taxon>
    </lineage>
</organism>
<sequence>MLRAAFRGSAYIGVFARATESCVLVRPDLDDDFVDSIADELGVPAVQTTVGGSSTVGSLAAGNSSGLLVSNRIRERERDRIEAAGVTVGELPGAVNAAGNVVVANDDGAYVHSGLSDDAVAAVEETLDVSATRGQLAGVDTVGTAAVATTDGVLCHPKATDAELERIEETLGVYADVGTVNYGAPLVGSGLVAADDGYLVGDDTTGPEIGRIEDTLGYIE</sequence>
<name>IF6_HALS3</name>
<accession>B0R7X7</accession>
<comment type="function">
    <text evidence="1">Binds to the 50S ribosomal subunit and prevents its association with the 30S ribosomal subunit to form the 70S initiation complex.</text>
</comment>
<comment type="similarity">
    <text evidence="1">Belongs to the eIF-6 family.</text>
</comment>
<feature type="chain" id="PRO_1000090393" description="Translation initiation factor 6">
    <location>
        <begin position="1"/>
        <end position="220"/>
    </location>
</feature>
<proteinExistence type="inferred from homology"/>
<keyword id="KW-0396">Initiation factor</keyword>
<keyword id="KW-0648">Protein biosynthesis</keyword>
<reference key="1">
    <citation type="journal article" date="2008" name="Genomics">
        <title>Evolution in the laboratory: the genome of Halobacterium salinarum strain R1 compared to that of strain NRC-1.</title>
        <authorList>
            <person name="Pfeiffer F."/>
            <person name="Schuster S.C."/>
            <person name="Broicher A."/>
            <person name="Falb M."/>
            <person name="Palm P."/>
            <person name="Rodewald K."/>
            <person name="Ruepp A."/>
            <person name="Soppa J."/>
            <person name="Tittor J."/>
            <person name="Oesterhelt D."/>
        </authorList>
    </citation>
    <scope>NUCLEOTIDE SEQUENCE [LARGE SCALE GENOMIC DNA]</scope>
    <source>
        <strain>ATCC 29341 / DSM 671 / R1</strain>
    </source>
</reference>
<gene>
    <name evidence="1" type="primary">eif6</name>
    <name type="ordered locus">OE_4458R</name>
</gene>
<protein>
    <recommendedName>
        <fullName evidence="1">Translation initiation factor 6</fullName>
        <shortName evidence="1">aIF-6</shortName>
    </recommendedName>
</protein>
<dbReference type="EMBL" id="AM774415">
    <property type="protein sequence ID" value="CAP14846.1"/>
    <property type="molecule type" value="Genomic_DNA"/>
</dbReference>
<dbReference type="RefSeq" id="WP_010903842.1">
    <property type="nucleotide sequence ID" value="NC_010364.1"/>
</dbReference>
<dbReference type="SMR" id="B0R7X7"/>
<dbReference type="EnsemblBacteria" id="CAP14846">
    <property type="protein sequence ID" value="CAP14846"/>
    <property type="gene ID" value="OE_4458R"/>
</dbReference>
<dbReference type="KEGG" id="hsl:OE_4458R"/>
<dbReference type="HOGENOM" id="CLU_071894_1_0_2"/>
<dbReference type="PhylomeDB" id="B0R7X7"/>
<dbReference type="Proteomes" id="UP000001321">
    <property type="component" value="Chromosome"/>
</dbReference>
<dbReference type="GO" id="GO:0043022">
    <property type="term" value="F:ribosome binding"/>
    <property type="evidence" value="ECO:0007669"/>
    <property type="project" value="InterPro"/>
</dbReference>
<dbReference type="GO" id="GO:0003743">
    <property type="term" value="F:translation initiation factor activity"/>
    <property type="evidence" value="ECO:0007669"/>
    <property type="project" value="UniProtKB-UniRule"/>
</dbReference>
<dbReference type="GO" id="GO:0042256">
    <property type="term" value="P:cytosolic ribosome assembly"/>
    <property type="evidence" value="ECO:0007669"/>
    <property type="project" value="InterPro"/>
</dbReference>
<dbReference type="CDD" id="cd00527">
    <property type="entry name" value="IF6"/>
    <property type="match status" value="1"/>
</dbReference>
<dbReference type="Gene3D" id="3.75.10.10">
    <property type="entry name" value="L-arginine/glycine Amidinotransferase, Chain A"/>
    <property type="match status" value="1"/>
</dbReference>
<dbReference type="HAMAP" id="MF_00032">
    <property type="entry name" value="eIF_6"/>
    <property type="match status" value="1"/>
</dbReference>
<dbReference type="InterPro" id="IPR002769">
    <property type="entry name" value="eIF6"/>
</dbReference>
<dbReference type="NCBIfam" id="TIGR00323">
    <property type="entry name" value="eIF-6"/>
    <property type="match status" value="1"/>
</dbReference>
<dbReference type="NCBIfam" id="NF003128">
    <property type="entry name" value="PRK04046.1-4"/>
    <property type="match status" value="1"/>
</dbReference>
<dbReference type="PANTHER" id="PTHR10784">
    <property type="entry name" value="TRANSLATION INITIATION FACTOR 6"/>
    <property type="match status" value="1"/>
</dbReference>
<dbReference type="Pfam" id="PF01912">
    <property type="entry name" value="eIF-6"/>
    <property type="match status" value="1"/>
</dbReference>
<dbReference type="PIRSF" id="PIRSF006413">
    <property type="entry name" value="IF-6"/>
    <property type="match status" value="1"/>
</dbReference>
<dbReference type="SMART" id="SM00654">
    <property type="entry name" value="eIF6"/>
    <property type="match status" value="1"/>
</dbReference>
<dbReference type="SUPFAM" id="SSF55909">
    <property type="entry name" value="Pentein"/>
    <property type="match status" value="1"/>
</dbReference>
<evidence type="ECO:0000255" key="1">
    <source>
        <dbReference type="HAMAP-Rule" id="MF_00032"/>
    </source>
</evidence>